<dbReference type="EC" id="2.3.2.27"/>
<dbReference type="EMBL" id="AK030843">
    <property type="protein sequence ID" value="BAC27156.1"/>
    <property type="molecule type" value="mRNA"/>
</dbReference>
<dbReference type="EMBL" id="AK030862">
    <property type="protein sequence ID" value="BAC27160.1"/>
    <property type="molecule type" value="mRNA"/>
</dbReference>
<dbReference type="EMBL" id="AK039280">
    <property type="protein sequence ID" value="BAC30304.1"/>
    <property type="molecule type" value="mRNA"/>
</dbReference>
<dbReference type="EMBL" id="AK042070">
    <property type="protein sequence ID" value="BAC31152.1"/>
    <property type="molecule type" value="mRNA"/>
</dbReference>
<dbReference type="EMBL" id="AK088922">
    <property type="protein sequence ID" value="BAC40654.1"/>
    <property type="molecule type" value="mRNA"/>
</dbReference>
<dbReference type="EMBL" id="BC056390">
    <property type="protein sequence ID" value="AAH56390.1"/>
    <property type="molecule type" value="mRNA"/>
</dbReference>
<dbReference type="EMBL" id="BC059017">
    <property type="protein sequence ID" value="AAH59017.1"/>
    <property type="molecule type" value="mRNA"/>
</dbReference>
<dbReference type="CCDS" id="CCDS88515.1">
    <molecule id="Q8BGX0-1"/>
</dbReference>
<dbReference type="CCDS" id="CCDS88516.1">
    <molecule id="Q8BGX0-3"/>
</dbReference>
<dbReference type="RefSeq" id="NP_001348467.1">
    <molecule id="Q8BGX0-1"/>
    <property type="nucleotide sequence ID" value="NM_001361538.1"/>
</dbReference>
<dbReference type="RefSeq" id="NP_001348468.1">
    <molecule id="Q8BGX0-3"/>
    <property type="nucleotide sequence ID" value="NM_001361539.1"/>
</dbReference>
<dbReference type="RefSeq" id="NP_109656.1">
    <property type="nucleotide sequence ID" value="NM_030731.3"/>
</dbReference>
<dbReference type="SMR" id="Q8BGX0"/>
<dbReference type="BioGRID" id="219862">
    <property type="interactions" value="2"/>
</dbReference>
<dbReference type="FunCoup" id="Q8BGX0">
    <property type="interactions" value="2264"/>
</dbReference>
<dbReference type="STRING" id="10090.ENSMUSP00000069371"/>
<dbReference type="iPTMnet" id="Q8BGX0"/>
<dbReference type="PhosphoSitePlus" id="Q8BGX0"/>
<dbReference type="jPOST" id="Q8BGX0"/>
<dbReference type="PaxDb" id="10090-ENSMUSP00000069371"/>
<dbReference type="PeptideAtlas" id="Q8BGX0"/>
<dbReference type="ProteomicsDB" id="259312">
    <molecule id="Q8BGX0-1"/>
</dbReference>
<dbReference type="ProteomicsDB" id="259313">
    <molecule id="Q8BGX0-2"/>
</dbReference>
<dbReference type="ProteomicsDB" id="259314">
    <molecule id="Q8BGX0-3"/>
</dbReference>
<dbReference type="Pumba" id="Q8BGX0"/>
<dbReference type="Antibodypedia" id="11584">
    <property type="antibodies" value="259 antibodies from 32 providers"/>
</dbReference>
<dbReference type="Ensembl" id="ENSMUST00000022225.12">
    <molecule id="Q8BGX0-1"/>
    <property type="protein sequence ID" value="ENSMUSP00000022225.6"/>
    <property type="gene ID" value="ENSMUSG00000021712.16"/>
</dbReference>
<dbReference type="Ensembl" id="ENSMUST00000069174.6">
    <molecule id="Q8BGX0-2"/>
    <property type="protein sequence ID" value="ENSMUSP00000069371.6"/>
    <property type="gene ID" value="ENSMUSG00000021712.16"/>
</dbReference>
<dbReference type="Ensembl" id="ENSMUST00000069187.12">
    <molecule id="Q8BGX0-3"/>
    <property type="protein sequence ID" value="ENSMUSP00000070767.6"/>
    <property type="gene ID" value="ENSMUSG00000021712.16"/>
</dbReference>
<dbReference type="GeneID" id="81003"/>
<dbReference type="UCSC" id="uc007rsx.1">
    <molecule id="Q8BGX0-1"/>
    <property type="organism name" value="mouse"/>
</dbReference>
<dbReference type="UCSC" id="uc007rsy.1">
    <molecule id="Q8BGX0-2"/>
    <property type="organism name" value="mouse"/>
</dbReference>
<dbReference type="UCSC" id="uc011zeg.1">
    <molecule id="Q8BGX0-3"/>
    <property type="organism name" value="mouse"/>
</dbReference>
<dbReference type="AGR" id="MGI:1933161"/>
<dbReference type="MGI" id="MGI:1933161">
    <property type="gene designation" value="Trim23"/>
</dbReference>
<dbReference type="VEuPathDB" id="HostDB:ENSMUSG00000021712"/>
<dbReference type="eggNOG" id="KOG0070">
    <property type="taxonomic scope" value="Eukaryota"/>
</dbReference>
<dbReference type="eggNOG" id="KOG4185">
    <property type="taxonomic scope" value="Eukaryota"/>
</dbReference>
<dbReference type="GeneTree" id="ENSGT00940000158562"/>
<dbReference type="HOGENOM" id="CLU_033905_0_0_1"/>
<dbReference type="InParanoid" id="Q8BGX0"/>
<dbReference type="OMA" id="IQACDAK"/>
<dbReference type="OrthoDB" id="2011769at2759"/>
<dbReference type="PhylomeDB" id="Q8BGX0"/>
<dbReference type="TreeFam" id="TF320703"/>
<dbReference type="UniPathway" id="UPA00143"/>
<dbReference type="BioGRID-ORCS" id="81003">
    <property type="hits" value="1 hit in 64 CRISPR screens"/>
</dbReference>
<dbReference type="ChiTaRS" id="Trim23">
    <property type="organism name" value="mouse"/>
</dbReference>
<dbReference type="PRO" id="PR:Q8BGX0"/>
<dbReference type="Proteomes" id="UP000000589">
    <property type="component" value="Chromosome 13"/>
</dbReference>
<dbReference type="RNAct" id="Q8BGX0">
    <property type="molecule type" value="protein"/>
</dbReference>
<dbReference type="Bgee" id="ENSMUSG00000021712">
    <property type="expression patterns" value="Expressed in spermatocyte and 255 other cell types or tissues"/>
</dbReference>
<dbReference type="GO" id="GO:0005737">
    <property type="term" value="C:cytoplasm"/>
    <property type="evidence" value="ECO:0000314"/>
    <property type="project" value="MGI"/>
</dbReference>
<dbReference type="GO" id="GO:0000139">
    <property type="term" value="C:Golgi membrane"/>
    <property type="evidence" value="ECO:0000250"/>
    <property type="project" value="HGNC-UCL"/>
</dbReference>
<dbReference type="GO" id="GO:0005765">
    <property type="term" value="C:lysosomal membrane"/>
    <property type="evidence" value="ECO:0000250"/>
    <property type="project" value="HGNC-UCL"/>
</dbReference>
<dbReference type="GO" id="GO:0005634">
    <property type="term" value="C:nucleus"/>
    <property type="evidence" value="ECO:0000314"/>
    <property type="project" value="MGI"/>
</dbReference>
<dbReference type="GO" id="GO:0019003">
    <property type="term" value="F:GDP binding"/>
    <property type="evidence" value="ECO:0000250"/>
    <property type="project" value="HGNC-UCL"/>
</dbReference>
<dbReference type="GO" id="GO:0005525">
    <property type="term" value="F:GTP binding"/>
    <property type="evidence" value="ECO:0000250"/>
    <property type="project" value="HGNC-UCL"/>
</dbReference>
<dbReference type="GO" id="GO:0003924">
    <property type="term" value="F:GTPase activity"/>
    <property type="evidence" value="ECO:0000250"/>
    <property type="project" value="HGNC-UCL"/>
</dbReference>
<dbReference type="GO" id="GO:0042802">
    <property type="term" value="F:identical protein binding"/>
    <property type="evidence" value="ECO:0007669"/>
    <property type="project" value="Ensembl"/>
</dbReference>
<dbReference type="GO" id="GO:0061630">
    <property type="term" value="F:ubiquitin protein ligase activity"/>
    <property type="evidence" value="ECO:0007669"/>
    <property type="project" value="Ensembl"/>
</dbReference>
<dbReference type="GO" id="GO:0004842">
    <property type="term" value="F:ubiquitin-protein transferase activity"/>
    <property type="evidence" value="ECO:0000250"/>
    <property type="project" value="HGNC-UCL"/>
</dbReference>
<dbReference type="GO" id="GO:0008270">
    <property type="term" value="F:zinc ion binding"/>
    <property type="evidence" value="ECO:0007669"/>
    <property type="project" value="UniProtKB-KW"/>
</dbReference>
<dbReference type="GO" id="GO:0010508">
    <property type="term" value="P:positive regulation of autophagy"/>
    <property type="evidence" value="ECO:0007669"/>
    <property type="project" value="Ensembl"/>
</dbReference>
<dbReference type="GO" id="GO:0016567">
    <property type="term" value="P:protein ubiquitination"/>
    <property type="evidence" value="ECO:0000250"/>
    <property type="project" value="HGNC-UCL"/>
</dbReference>
<dbReference type="CDD" id="cd04158">
    <property type="entry name" value="ARD1"/>
    <property type="match status" value="1"/>
</dbReference>
<dbReference type="CDD" id="cd19773">
    <property type="entry name" value="Bbox2_TRIM23_C-IX_rpt1"/>
    <property type="match status" value="1"/>
</dbReference>
<dbReference type="CDD" id="cd19774">
    <property type="entry name" value="Bbox2_TRIM23_C-IX_rpt2"/>
    <property type="match status" value="1"/>
</dbReference>
<dbReference type="CDD" id="cd16645">
    <property type="entry name" value="mRING-HC-C3HC3D_TRIM23_C-IX"/>
    <property type="match status" value="1"/>
</dbReference>
<dbReference type="FunFam" id="3.30.160.60:FF:000440">
    <property type="entry name" value="E3 ubiquitin-protein ligase TRIM23"/>
    <property type="match status" value="1"/>
</dbReference>
<dbReference type="FunFam" id="3.30.40.10:FF:000130">
    <property type="entry name" value="E3 ubiquitin-protein ligase TRIM23"/>
    <property type="match status" value="1"/>
</dbReference>
<dbReference type="FunFam" id="3.40.50.300:FF:000486">
    <property type="entry name" value="E3 ubiquitin-protein ligase TRIM23"/>
    <property type="match status" value="1"/>
</dbReference>
<dbReference type="Gene3D" id="3.30.160.60">
    <property type="entry name" value="Classic Zinc Finger"/>
    <property type="match status" value="1"/>
</dbReference>
<dbReference type="Gene3D" id="3.40.50.300">
    <property type="entry name" value="P-loop containing nucleotide triphosphate hydrolases"/>
    <property type="match status" value="1"/>
</dbReference>
<dbReference type="Gene3D" id="3.30.40.10">
    <property type="entry name" value="Zinc/RING finger domain, C3HC4 (zinc finger)"/>
    <property type="match status" value="1"/>
</dbReference>
<dbReference type="InterPro" id="IPR003649">
    <property type="entry name" value="Bbox_C"/>
</dbReference>
<dbReference type="InterPro" id="IPR027417">
    <property type="entry name" value="P-loop_NTPase"/>
</dbReference>
<dbReference type="InterPro" id="IPR005225">
    <property type="entry name" value="Small_GTP-bd"/>
</dbReference>
<dbReference type="InterPro" id="IPR024156">
    <property type="entry name" value="Small_GTPase_ARF"/>
</dbReference>
<dbReference type="InterPro" id="IPR006689">
    <property type="entry name" value="Small_GTPase_ARF/SAR"/>
</dbReference>
<dbReference type="InterPro" id="IPR027370">
    <property type="entry name" value="Znf-RING_euk"/>
</dbReference>
<dbReference type="InterPro" id="IPR000315">
    <property type="entry name" value="Znf_B-box"/>
</dbReference>
<dbReference type="InterPro" id="IPR013087">
    <property type="entry name" value="Znf_C2H2_type"/>
</dbReference>
<dbReference type="InterPro" id="IPR001841">
    <property type="entry name" value="Znf_RING"/>
</dbReference>
<dbReference type="InterPro" id="IPR013083">
    <property type="entry name" value="Znf_RING/FYVE/PHD"/>
</dbReference>
<dbReference type="InterPro" id="IPR017907">
    <property type="entry name" value="Znf_RING_CS"/>
</dbReference>
<dbReference type="NCBIfam" id="TIGR00231">
    <property type="entry name" value="small_GTP"/>
    <property type="match status" value="1"/>
</dbReference>
<dbReference type="PANTHER" id="PTHR11711">
    <property type="entry name" value="ADP RIBOSYLATION FACTOR-RELATED"/>
    <property type="match status" value="1"/>
</dbReference>
<dbReference type="Pfam" id="PF00025">
    <property type="entry name" value="Arf"/>
    <property type="match status" value="1"/>
</dbReference>
<dbReference type="Pfam" id="PF00643">
    <property type="entry name" value="zf-B_box"/>
    <property type="match status" value="1"/>
</dbReference>
<dbReference type="Pfam" id="PF13445">
    <property type="entry name" value="zf-RING_UBOX"/>
    <property type="match status" value="1"/>
</dbReference>
<dbReference type="PRINTS" id="PR00328">
    <property type="entry name" value="SAR1GTPBP"/>
</dbReference>
<dbReference type="SMART" id="SM00177">
    <property type="entry name" value="ARF"/>
    <property type="match status" value="1"/>
</dbReference>
<dbReference type="SMART" id="SM00502">
    <property type="entry name" value="BBC"/>
    <property type="match status" value="1"/>
</dbReference>
<dbReference type="SMART" id="SM00336">
    <property type="entry name" value="BBOX"/>
    <property type="match status" value="2"/>
</dbReference>
<dbReference type="SMART" id="SM00175">
    <property type="entry name" value="RAB"/>
    <property type="match status" value="1"/>
</dbReference>
<dbReference type="SMART" id="SM00184">
    <property type="entry name" value="RING"/>
    <property type="match status" value="1"/>
</dbReference>
<dbReference type="SMART" id="SM00178">
    <property type="entry name" value="SAR"/>
    <property type="match status" value="1"/>
</dbReference>
<dbReference type="SUPFAM" id="SSF57845">
    <property type="entry name" value="B-box zinc-binding domain"/>
    <property type="match status" value="1"/>
</dbReference>
<dbReference type="SUPFAM" id="SSF52540">
    <property type="entry name" value="P-loop containing nucleoside triphosphate hydrolases"/>
    <property type="match status" value="1"/>
</dbReference>
<dbReference type="SUPFAM" id="SSF57850">
    <property type="entry name" value="RING/U-box"/>
    <property type="match status" value="1"/>
</dbReference>
<dbReference type="PROSITE" id="PS51417">
    <property type="entry name" value="ARF"/>
    <property type="match status" value="1"/>
</dbReference>
<dbReference type="PROSITE" id="PS50119">
    <property type="entry name" value="ZF_BBOX"/>
    <property type="match status" value="1"/>
</dbReference>
<dbReference type="PROSITE" id="PS00518">
    <property type="entry name" value="ZF_RING_1"/>
    <property type="match status" value="1"/>
</dbReference>
<dbReference type="PROSITE" id="PS50089">
    <property type="entry name" value="ZF_RING_2"/>
    <property type="match status" value="1"/>
</dbReference>
<organism>
    <name type="scientific">Mus musculus</name>
    <name type="common">Mouse</name>
    <dbReference type="NCBI Taxonomy" id="10090"/>
    <lineage>
        <taxon>Eukaryota</taxon>
        <taxon>Metazoa</taxon>
        <taxon>Chordata</taxon>
        <taxon>Craniata</taxon>
        <taxon>Vertebrata</taxon>
        <taxon>Euteleostomi</taxon>
        <taxon>Mammalia</taxon>
        <taxon>Eutheria</taxon>
        <taxon>Euarchontoglires</taxon>
        <taxon>Glires</taxon>
        <taxon>Rodentia</taxon>
        <taxon>Myomorpha</taxon>
        <taxon>Muroidea</taxon>
        <taxon>Muridae</taxon>
        <taxon>Murinae</taxon>
        <taxon>Mus</taxon>
        <taxon>Mus</taxon>
    </lineage>
</organism>
<reference key="1">
    <citation type="journal article" date="2005" name="Science">
        <title>The transcriptional landscape of the mammalian genome.</title>
        <authorList>
            <person name="Carninci P."/>
            <person name="Kasukawa T."/>
            <person name="Katayama S."/>
            <person name="Gough J."/>
            <person name="Frith M.C."/>
            <person name="Maeda N."/>
            <person name="Oyama R."/>
            <person name="Ravasi T."/>
            <person name="Lenhard B."/>
            <person name="Wells C."/>
            <person name="Kodzius R."/>
            <person name="Shimokawa K."/>
            <person name="Bajic V.B."/>
            <person name="Brenner S.E."/>
            <person name="Batalov S."/>
            <person name="Forrest A.R."/>
            <person name="Zavolan M."/>
            <person name="Davis M.J."/>
            <person name="Wilming L.G."/>
            <person name="Aidinis V."/>
            <person name="Allen J.E."/>
            <person name="Ambesi-Impiombato A."/>
            <person name="Apweiler R."/>
            <person name="Aturaliya R.N."/>
            <person name="Bailey T.L."/>
            <person name="Bansal M."/>
            <person name="Baxter L."/>
            <person name="Beisel K.W."/>
            <person name="Bersano T."/>
            <person name="Bono H."/>
            <person name="Chalk A.M."/>
            <person name="Chiu K.P."/>
            <person name="Choudhary V."/>
            <person name="Christoffels A."/>
            <person name="Clutterbuck D.R."/>
            <person name="Crowe M.L."/>
            <person name="Dalla E."/>
            <person name="Dalrymple B.P."/>
            <person name="de Bono B."/>
            <person name="Della Gatta G."/>
            <person name="di Bernardo D."/>
            <person name="Down T."/>
            <person name="Engstrom P."/>
            <person name="Fagiolini M."/>
            <person name="Faulkner G."/>
            <person name="Fletcher C.F."/>
            <person name="Fukushima T."/>
            <person name="Furuno M."/>
            <person name="Futaki S."/>
            <person name="Gariboldi M."/>
            <person name="Georgii-Hemming P."/>
            <person name="Gingeras T.R."/>
            <person name="Gojobori T."/>
            <person name="Green R.E."/>
            <person name="Gustincich S."/>
            <person name="Harbers M."/>
            <person name="Hayashi Y."/>
            <person name="Hensch T.K."/>
            <person name="Hirokawa N."/>
            <person name="Hill D."/>
            <person name="Huminiecki L."/>
            <person name="Iacono M."/>
            <person name="Ikeo K."/>
            <person name="Iwama A."/>
            <person name="Ishikawa T."/>
            <person name="Jakt M."/>
            <person name="Kanapin A."/>
            <person name="Katoh M."/>
            <person name="Kawasawa Y."/>
            <person name="Kelso J."/>
            <person name="Kitamura H."/>
            <person name="Kitano H."/>
            <person name="Kollias G."/>
            <person name="Krishnan S.P."/>
            <person name="Kruger A."/>
            <person name="Kummerfeld S.K."/>
            <person name="Kurochkin I.V."/>
            <person name="Lareau L.F."/>
            <person name="Lazarevic D."/>
            <person name="Lipovich L."/>
            <person name="Liu J."/>
            <person name="Liuni S."/>
            <person name="McWilliam S."/>
            <person name="Madan Babu M."/>
            <person name="Madera M."/>
            <person name="Marchionni L."/>
            <person name="Matsuda H."/>
            <person name="Matsuzawa S."/>
            <person name="Miki H."/>
            <person name="Mignone F."/>
            <person name="Miyake S."/>
            <person name="Morris K."/>
            <person name="Mottagui-Tabar S."/>
            <person name="Mulder N."/>
            <person name="Nakano N."/>
            <person name="Nakauchi H."/>
            <person name="Ng P."/>
            <person name="Nilsson R."/>
            <person name="Nishiguchi S."/>
            <person name="Nishikawa S."/>
            <person name="Nori F."/>
            <person name="Ohara O."/>
            <person name="Okazaki Y."/>
            <person name="Orlando V."/>
            <person name="Pang K.C."/>
            <person name="Pavan W.J."/>
            <person name="Pavesi G."/>
            <person name="Pesole G."/>
            <person name="Petrovsky N."/>
            <person name="Piazza S."/>
            <person name="Reed J."/>
            <person name="Reid J.F."/>
            <person name="Ring B.Z."/>
            <person name="Ringwald M."/>
            <person name="Rost B."/>
            <person name="Ruan Y."/>
            <person name="Salzberg S.L."/>
            <person name="Sandelin A."/>
            <person name="Schneider C."/>
            <person name="Schoenbach C."/>
            <person name="Sekiguchi K."/>
            <person name="Semple C.A."/>
            <person name="Seno S."/>
            <person name="Sessa L."/>
            <person name="Sheng Y."/>
            <person name="Shibata Y."/>
            <person name="Shimada H."/>
            <person name="Shimada K."/>
            <person name="Silva D."/>
            <person name="Sinclair B."/>
            <person name="Sperling S."/>
            <person name="Stupka E."/>
            <person name="Sugiura K."/>
            <person name="Sultana R."/>
            <person name="Takenaka Y."/>
            <person name="Taki K."/>
            <person name="Tammoja K."/>
            <person name="Tan S.L."/>
            <person name="Tang S."/>
            <person name="Taylor M.S."/>
            <person name="Tegner J."/>
            <person name="Teichmann S.A."/>
            <person name="Ueda H.R."/>
            <person name="van Nimwegen E."/>
            <person name="Verardo R."/>
            <person name="Wei C.L."/>
            <person name="Yagi K."/>
            <person name="Yamanishi H."/>
            <person name="Zabarovsky E."/>
            <person name="Zhu S."/>
            <person name="Zimmer A."/>
            <person name="Hide W."/>
            <person name="Bult C."/>
            <person name="Grimmond S.M."/>
            <person name="Teasdale R.D."/>
            <person name="Liu E.T."/>
            <person name="Brusic V."/>
            <person name="Quackenbush J."/>
            <person name="Wahlestedt C."/>
            <person name="Mattick J.S."/>
            <person name="Hume D.A."/>
            <person name="Kai C."/>
            <person name="Sasaki D."/>
            <person name="Tomaru Y."/>
            <person name="Fukuda S."/>
            <person name="Kanamori-Katayama M."/>
            <person name="Suzuki M."/>
            <person name="Aoki J."/>
            <person name="Arakawa T."/>
            <person name="Iida J."/>
            <person name="Imamura K."/>
            <person name="Itoh M."/>
            <person name="Kato T."/>
            <person name="Kawaji H."/>
            <person name="Kawagashira N."/>
            <person name="Kawashima T."/>
            <person name="Kojima M."/>
            <person name="Kondo S."/>
            <person name="Konno H."/>
            <person name="Nakano K."/>
            <person name="Ninomiya N."/>
            <person name="Nishio T."/>
            <person name="Okada M."/>
            <person name="Plessy C."/>
            <person name="Shibata K."/>
            <person name="Shiraki T."/>
            <person name="Suzuki S."/>
            <person name="Tagami M."/>
            <person name="Waki K."/>
            <person name="Watahiki A."/>
            <person name="Okamura-Oho Y."/>
            <person name="Suzuki H."/>
            <person name="Kawai J."/>
            <person name="Hayashizaki Y."/>
        </authorList>
    </citation>
    <scope>NUCLEOTIDE SEQUENCE [LARGE SCALE MRNA] (ISOFORMS 1; 2 AND 3)</scope>
    <source>
        <strain>C57BL/6J</strain>
        <tissue>Spinal cord</tissue>
        <tissue>Thymus</tissue>
    </source>
</reference>
<reference key="2">
    <citation type="journal article" date="2004" name="Genome Res.">
        <title>The status, quality, and expansion of the NIH full-length cDNA project: the Mammalian Gene Collection (MGC).</title>
        <authorList>
            <consortium name="The MGC Project Team"/>
        </authorList>
    </citation>
    <scope>NUCLEOTIDE SEQUENCE [LARGE SCALE MRNA] (ISOFORM 1)</scope>
    <source>
        <strain>C57BL/6J</strain>
        <tissue>Brain</tissue>
    </source>
</reference>
<keyword id="KW-0025">Alternative splicing</keyword>
<keyword id="KW-0175">Coiled coil</keyword>
<keyword id="KW-0963">Cytoplasm</keyword>
<keyword id="KW-0333">Golgi apparatus</keyword>
<keyword id="KW-0342">GTP-binding</keyword>
<keyword id="KW-0458">Lysosome</keyword>
<keyword id="KW-0472">Membrane</keyword>
<keyword id="KW-0479">Metal-binding</keyword>
<keyword id="KW-0547">Nucleotide-binding</keyword>
<keyword id="KW-1185">Reference proteome</keyword>
<keyword id="KW-0808">Transferase</keyword>
<keyword id="KW-0833">Ubl conjugation pathway</keyword>
<keyword id="KW-0862">Zinc</keyword>
<keyword id="KW-0863">Zinc-finger</keyword>
<protein>
    <recommendedName>
        <fullName>E3 ubiquitin-protein ligase TRIM23</fullName>
        <ecNumber>2.3.2.27</ecNumber>
    </recommendedName>
    <alternativeName>
        <fullName>ADP-ribosylation factor domain-containing protein 1</fullName>
    </alternativeName>
    <alternativeName>
        <fullName>GTP-binding protein ARD-1</fullName>
    </alternativeName>
    <alternativeName>
        <fullName evidence="7">RING-type E3 ubiquitin transferase TRIM23</fullName>
    </alternativeName>
    <alternativeName>
        <fullName>Tripartite motif-containing protein 23</fullName>
    </alternativeName>
</protein>
<sequence length="574" mass="63931">MAALAVNKPGAGVDSGRQGSRGTAVVKVLECGVCEDVFSLQGDKVPRLLLCGHTVCHDCLTRLPLHGRAIRCPFDRQVTDLGDSGVWGLKKNFALLELLERLQNGHIGQYGAAEEAIGTSGESIIRCDEDEAHVASVYCTVCATHLCSDCSQVTHSTKTLAKHRRVPLADKPHEKTMCCQHQVHAIEFVCLEEGCQTSPLMCCVCKEYGKHQGHKHSVLEPEANQIRASILDMAHCIRTFTEEISDYSRKLVGIVQHIEGGEQIVEDGIGMAHTEHVPGTAENARSCVRAYFSDLHETLCRQEEMALSVVDAHVREKLIWLRQQQEDMTILLSQVSTACLHCEKTLQQDDCRVVLAKQEITRLLETLQKQQQQFTEVADHIQLDASIPVTFTKDNRVHIGPKMEIRVVTLGLDGAGKTTILFKLKQDEFMQPIPTIGFNVETVEYKNLKFTIWDVGGKHKLRPLWKHYYLNTQAVVFVVDSSHRDRISEAHSELAKLLTEKELRDALLLIFANKQDVAGALSVEEITELLSLHKLCCGRSWYIQGCDARSGMGLYEGLDWLSRQLVAAGVLDVA</sequence>
<feature type="chain" id="PRO_0000207484" description="E3 ubiquitin-protein ligase TRIM23">
    <location>
        <begin position="1"/>
        <end position="574"/>
    </location>
</feature>
<feature type="zinc finger region" description="RING-type; degenerate" evidence="5">
    <location>
        <begin position="31"/>
        <end position="76"/>
    </location>
</feature>
<feature type="zinc finger region" description="B box-type; degenerate" evidence="4">
    <location>
        <begin position="122"/>
        <end position="168"/>
    </location>
</feature>
<feature type="region of interest" description="ARF-like">
    <location>
        <begin position="390"/>
        <end position="574"/>
    </location>
</feature>
<feature type="coiled-coil region" evidence="3">
    <location>
        <begin position="352"/>
        <end position="379"/>
    </location>
</feature>
<feature type="binding site" evidence="1">
    <location>
        <begin position="411"/>
        <end position="418"/>
    </location>
    <ligand>
        <name>GTP</name>
        <dbReference type="ChEBI" id="CHEBI:37565"/>
    </ligand>
</feature>
<feature type="binding site" evidence="1">
    <location>
        <begin position="454"/>
        <end position="458"/>
    </location>
    <ligand>
        <name>GTP</name>
        <dbReference type="ChEBI" id="CHEBI:37565"/>
    </ligand>
</feature>
<feature type="binding site" evidence="1">
    <location>
        <begin position="513"/>
        <end position="516"/>
    </location>
    <ligand>
        <name>GTP</name>
        <dbReference type="ChEBI" id="CHEBI:37565"/>
    </ligand>
</feature>
<feature type="splice variant" id="VSP_010814" description="In isoform 2." evidence="6">
    <original>MAALAVNKPGAGVDSGRQGSRGTAVVK</original>
    <variation>MFLFYIQ</variation>
    <location>
        <begin position="1"/>
        <end position="27"/>
    </location>
</feature>
<feature type="splice variant" id="VSP_010815" description="In isoform 3." evidence="6">
    <location>
        <begin position="216"/>
        <end position="276"/>
    </location>
</feature>
<feature type="sequence conflict" description="In Ref. 1; BAC27156." evidence="7" ref="1">
    <original>Q</original>
    <variation>K</variation>
    <location>
        <position position="371"/>
    </location>
</feature>
<proteinExistence type="evidence at transcript level"/>
<comment type="function">
    <text evidence="2">Acts as an E3 ubiquitin-protein ligase. Plays an essential role in autophagy activation during viral infection. Mechanistically, activates TANK-binding kinase 1/TBK1 by facilitating its dimerization and ability to phosphorylate the selective autophagy receptor SQSTM1. In order to achieve this function, TRIM23 mediates 'Lys-27'-linked auto-ubiquitination of its ADP-ribosylation factor (ARF) domain to induce its GTPase activity and its recruitment to autophagosomes.</text>
</comment>
<comment type="catalytic activity">
    <reaction evidence="2">
        <text>S-ubiquitinyl-[E2 ubiquitin-conjugating enzyme]-L-cysteine + [acceptor protein]-L-lysine = [E2 ubiquitin-conjugating enzyme]-L-cysteine + N(6)-ubiquitinyl-[acceptor protein]-L-lysine.</text>
        <dbReference type="EC" id="2.3.2.27"/>
    </reaction>
</comment>
<comment type="pathway">
    <text>Protein modification; protein ubiquitination.</text>
</comment>
<comment type="subunit">
    <text evidence="2">Homodimer. Interacts with PSCD1. Interacts with UBE2D2. Interacts with TBK1 (via N-terminal kinase domain) and p62/SQSTM1.</text>
</comment>
<comment type="subcellular location">
    <subcellularLocation>
        <location evidence="2">Cytoplasm</location>
    </subcellularLocation>
    <subcellularLocation>
        <location evidence="2">Endomembrane system</location>
    </subcellularLocation>
    <subcellularLocation>
        <location evidence="2">Golgi apparatus membrane</location>
    </subcellularLocation>
    <subcellularLocation>
        <location evidence="2">Lysosome membrane</location>
    </subcellularLocation>
    <text evidence="2">Membrane-associated with the Golgi complex and lysosomal structures.</text>
</comment>
<comment type="alternative products">
    <event type="alternative splicing"/>
    <isoform>
        <id>Q8BGX0-1</id>
        <name>1</name>
        <sequence type="displayed"/>
    </isoform>
    <isoform>
        <id>Q8BGX0-2</id>
        <name>2</name>
        <sequence type="described" ref="VSP_010814"/>
    </isoform>
    <isoform>
        <id>Q8BGX0-3</id>
        <name>3</name>
        <sequence type="described" ref="VSP_010815"/>
    </isoform>
</comment>
<comment type="domain">
    <text evidence="2">The RING-type zinc finger domain is responsible for E3 ubiquitin ligase activity.</text>
</comment>
<comment type="similarity">
    <text evidence="7">In the C-terminal section; belongs to the small GTPase superfamily. Arf family.</text>
</comment>
<evidence type="ECO:0000250" key="1"/>
<evidence type="ECO:0000250" key="2">
    <source>
        <dbReference type="UniProtKB" id="P36406"/>
    </source>
</evidence>
<evidence type="ECO:0000255" key="3"/>
<evidence type="ECO:0000255" key="4">
    <source>
        <dbReference type="PROSITE-ProRule" id="PRU00024"/>
    </source>
</evidence>
<evidence type="ECO:0000255" key="5">
    <source>
        <dbReference type="PROSITE-ProRule" id="PRU00175"/>
    </source>
</evidence>
<evidence type="ECO:0000303" key="6">
    <source>
    </source>
</evidence>
<evidence type="ECO:0000305" key="7"/>
<name>TRI23_MOUSE</name>
<accession>Q8BGX0</accession>
<accession>Q8C2B6</accession>
<accession>Q8CDA4</accession>
<accession>Q8CDA7</accession>
<gene>
    <name type="primary">Trim23</name>
    <name type="synonym">Arfd1</name>
</gene>